<gene>
    <name evidence="1 6" type="primary">psbA2</name>
    <name type="synonym">psbA-2</name>
    <name type="ordered locus">slr1311</name>
</gene>
<gene>
    <name evidence="1 6" type="primary">psbA3</name>
    <name type="synonym">psbA-3</name>
    <name type="ordered locus">sll1867</name>
</gene>
<keyword id="KW-0002">3D-structure</keyword>
<keyword id="KW-0106">Calcium</keyword>
<keyword id="KW-0148">Chlorophyll</keyword>
<keyword id="KW-0157">Chromophore</keyword>
<keyword id="KW-0249">Electron transport</keyword>
<keyword id="KW-0359">Herbicide resistance</keyword>
<keyword id="KW-0408">Iron</keyword>
<keyword id="KW-0460">Magnesium</keyword>
<keyword id="KW-0464">Manganese</keyword>
<keyword id="KW-0472">Membrane</keyword>
<keyword id="KW-0479">Metal-binding</keyword>
<keyword id="KW-0560">Oxidoreductase</keyword>
<keyword id="KW-0602">Photosynthesis</keyword>
<keyword id="KW-0604">Photosystem II</keyword>
<keyword id="KW-1185">Reference proteome</keyword>
<keyword id="KW-0793">Thylakoid</keyword>
<keyword id="KW-0812">Transmembrane</keyword>
<keyword id="KW-1133">Transmembrane helix</keyword>
<keyword id="KW-0813">Transport</keyword>
<reference key="1">
    <citation type="journal article" date="1989" name="Nucleic Acids Res.">
        <title>Nucleotide sequence of a second psbA gene from the unicellular cyanobacterium Synechocystis 6803.</title>
        <authorList>
            <person name="Ravnikar P.D."/>
            <person name="Debus R."/>
            <person name="Sevrinck J."/>
            <person name="Saetaert P."/>
            <person name="McIntosh L."/>
        </authorList>
    </citation>
    <scope>NUCLEOTIDE SEQUENCE [GENOMIC DNA]</scope>
</reference>
<reference key="2">
    <citation type="journal article" date="1990" name="Nucleic Acids Res.">
        <title>Nucleotide sequence of the psbA3 gene from the cyanobacterium Synechocystis PCC 6803.</title>
        <authorList>
            <person name="Metz J."/>
            <person name="Nixon P."/>
            <person name="Diner B."/>
        </authorList>
    </citation>
    <scope>NUCLEOTIDE SEQUENCE [GENOMIC DNA]</scope>
</reference>
<reference key="3">
    <citation type="journal article" date="1996" name="DNA Res.">
        <title>Sequence analysis of the genome of the unicellular cyanobacterium Synechocystis sp. strain PCC6803. II. Sequence determination of the entire genome and assignment of potential protein-coding regions.</title>
        <authorList>
            <person name="Kaneko T."/>
            <person name="Sato S."/>
            <person name="Kotani H."/>
            <person name="Tanaka A."/>
            <person name="Asamizu E."/>
            <person name="Nakamura Y."/>
            <person name="Miyajima N."/>
            <person name="Hirosawa M."/>
            <person name="Sugiura M."/>
            <person name="Sasamoto S."/>
            <person name="Kimura T."/>
            <person name="Hosouchi T."/>
            <person name="Matsuno A."/>
            <person name="Muraki A."/>
            <person name="Nakazaki N."/>
            <person name="Naruo K."/>
            <person name="Okumura S."/>
            <person name="Shimpo S."/>
            <person name="Takeuchi C."/>
            <person name="Wada T."/>
            <person name="Watanabe A."/>
            <person name="Yamada M."/>
            <person name="Yasuda M."/>
            <person name="Tabata S."/>
        </authorList>
    </citation>
    <scope>NUCLEOTIDE SEQUENCE [LARGE SCALE GENOMIC DNA]</scope>
    <source>
        <strain>ATCC 27184 / PCC 6803 / Kazusa</strain>
    </source>
</reference>
<reference key="4">
    <citation type="journal article" date="1992" name="Plant Cell">
        <title>Mutations in the D1 subunit of photosystem II distinguish between quinone and herbicide binding sites.</title>
        <authorList>
            <person name="Ohad N."/>
            <person name="Hirschberg J."/>
        </authorList>
    </citation>
    <scope>MUTAGENESIS OF PHE-255; SER-264 AND LEU-271</scope>
</reference>
<reference key="5">
    <citation type="journal article" date="1994" name="Biochemistry">
        <title>The D-E region of the D1 protein is involved in multiple quinone and herbicide interactions in photosystem II.</title>
        <authorList>
            <person name="Kless H."/>
            <person name="Oren-Shamir M."/>
            <person name="Malkin S."/>
            <person name="McIntosh L."/>
            <person name="Edelman M."/>
        </authorList>
    </citation>
    <scope>MUTAGENESIS OF 221-SER-SER-222; 227-THR-THR-228; TYR-237; LYS-238 AND ARG-257</scope>
</reference>
<reference key="6">
    <citation type="journal article" date="1994" name="J. Biol. Chem.">
        <title>Molecular cloning and characterization of the ctpA gene encoding a carboxyl-terminal processing protease. Analysis of a spontaneous photosystem II-deficient mutant strain of the cyanobacterium Synechocystis sp. PCC 6803.</title>
        <authorList>
            <person name="Shestakov S.V."/>
            <person name="Anbudurai P.R."/>
            <person name="Stanbekova G.E."/>
            <person name="Gadzhiev A."/>
            <person name="Lind L.K."/>
            <person name="Pakrasi H.B."/>
        </authorList>
    </citation>
    <scope>PROBABLE CLEAVAGE</scope>
    <source>
        <strain>ATCC 27184 / PCC 6803 / N-1</strain>
    </source>
</reference>
<reference key="7">
    <citation type="journal article" date="1998" name="FEBS Lett.">
        <title>Thylakoid protein phosphorylation in evolutionally divergent species with oxygenic photosynthesis.</title>
        <authorList>
            <person name="Pursiheimo S."/>
            <person name="Rintamaeki E."/>
            <person name="Baena-Gonzalez E."/>
            <person name="Aro E.-M."/>
        </authorList>
    </citation>
    <scope>SUBCELLULAR LOCATION</scope>
    <scope>LACK OF PHOSPHORYLATION</scope>
    <source>
        <strain>ATCC 27184 / PCC 6803 / Kazusa</strain>
    </source>
</reference>
<reference key="8">
    <citation type="journal article" date="2002" name="Biochemistry">
        <title>Proteomic analysis of a highly active photosystem II preparation from the cyanobacterium Synechocystis sp. PCC 6803 reveals the presence of novel polypeptides.</title>
        <authorList>
            <person name="Kashino Y."/>
            <person name="Lauber W.M."/>
            <person name="Carroll J.A."/>
            <person name="Wang Q."/>
            <person name="Whitmarsh J."/>
            <person name="Satoh K."/>
            <person name="Pakrasi H.B."/>
        </authorList>
    </citation>
    <scope>IDENTIFICATION BY MASS SPECTROMETRY</scope>
    <scope>SUBUNIT</scope>
    <scope>SUBCELLULAR LOCATION</scope>
    <source>
        <strain>ATCC 27184 / PCC 6803 / Kazusa</strain>
    </source>
</reference>
<reference evidence="11 12" key="9">
    <citation type="journal article" date="2022" name="Proc. Natl. Acad. Sci. U.S.A.">
        <title>High-resolution cryo-electron microscopy structure of photosystem II from the mesophilic cyanobacterium, Synechocystis sp. PCC 6803.</title>
        <authorList>
            <person name="Gisriel C.J."/>
            <person name="Wang J."/>
            <person name="Liu J."/>
            <person name="Flesher D.A."/>
            <person name="Reiss K.M."/>
            <person name="Huang H.L."/>
            <person name="Yang K.R."/>
            <person name="Armstrong W.H."/>
            <person name="Gunner M.R."/>
            <person name="Batista V.S."/>
            <person name="Debus R.J."/>
            <person name="Brudvig G.W."/>
        </authorList>
    </citation>
    <scope>STRUCTURE BY ELECTRON MICROSCOPY (1.93 ANGSTROMS) OF 11-344</scope>
    <scope>FUNCTION</scope>
    <scope>COFACTOR</scope>
    <scope>SUBUNIT</scope>
    <scope>SUBCELLULAR LOCATION</scope>
    <scope>TOPOLOGY</scope>
    <source>
        <strain>ATCC 27184 / PCC 6803 / Kazusa</strain>
    </source>
</reference>
<name>PSBA2_SYNY3</name>
<accession>P16033</accession>
<organism>
    <name type="scientific">Synechocystis sp. (strain ATCC 27184 / PCC 6803 / Kazusa)</name>
    <dbReference type="NCBI Taxonomy" id="1111708"/>
    <lineage>
        <taxon>Bacteria</taxon>
        <taxon>Bacillati</taxon>
        <taxon>Cyanobacteriota</taxon>
        <taxon>Cyanophyceae</taxon>
        <taxon>Synechococcales</taxon>
        <taxon>Merismopediaceae</taxon>
        <taxon>Synechocystis</taxon>
    </lineage>
</organism>
<sequence>MTTTLQQRESASLWEQFCQWVTSTNNRIYVGWFGTLMIPTLLTATTCFIIAFIAAPPVDIDGIREPVAGSLLYGNNIISGAVVPSSNAIGLHFYPIWEAASLDEWLYNGGPYQLVVFHFLIGIFCYMGRQWELSYRLGMRPWICVAYSAPVSAATAVFLIYPIGQGSFSDGMPLGISGTFNFMIVFQAEHNILMHPFHMLGVAGVFGGSLFSAMHGSLVTSSLVRETTEVESQNYGYKFGQEEETYNIVAAHGYFGRLIFQYASFNNSRSLHFFLGAWPVIGIWFTAMGVSTMAFNLNGFNFNQSILDSQGRVIGTWADVLNRANIGFEVMHERNAHNFPLDLASGEQAPVALTAPAVNG</sequence>
<feature type="chain" id="PRO_0000090493" description="Photosystem II protein D1 2" evidence="1">
    <location>
        <begin position="1"/>
        <end position="344"/>
    </location>
</feature>
<feature type="propeptide" id="PRO_0000316429" evidence="1 8">
    <location>
        <begin position="345"/>
        <end position="360"/>
    </location>
</feature>
<feature type="topological domain" description="Cytoplasmic" evidence="4 10">
    <location>
        <begin position="1"/>
        <end position="31"/>
    </location>
</feature>
<feature type="transmembrane region" description="Helical" evidence="4 10">
    <location>
        <begin position="32"/>
        <end position="53"/>
    </location>
</feature>
<feature type="topological domain" description="Lumenal, thylakoid" evidence="4 10">
    <location>
        <begin position="54"/>
        <end position="110"/>
    </location>
</feature>
<feature type="transmembrane region" description="Helical" evidence="4 10">
    <location>
        <begin position="111"/>
        <end position="134"/>
    </location>
</feature>
<feature type="topological domain" description="Cytoplasmic" evidence="4 10">
    <location>
        <begin position="135"/>
        <end position="142"/>
    </location>
</feature>
<feature type="transmembrane region" description="Helical" evidence="4 10">
    <location>
        <begin position="143"/>
        <end position="161"/>
    </location>
</feature>
<feature type="topological domain" description="Lumenal, thylakoid" evidence="4 10">
    <location>
        <begin position="162"/>
        <end position="191"/>
    </location>
</feature>
<feature type="transmembrane region" description="Helical" evidence="4 10">
    <location>
        <begin position="192"/>
        <end position="218"/>
    </location>
</feature>
<feature type="topological domain" description="Cytoplasmic" evidence="4 10">
    <location>
        <begin position="219"/>
        <end position="270"/>
    </location>
</feature>
<feature type="transmembrane region" description="Helical" evidence="4 10">
    <location>
        <begin position="271"/>
        <end position="295"/>
    </location>
</feature>
<feature type="topological domain" description="Lumenal, thylakoid" evidence="4 10">
    <location>
        <begin position="296"/>
        <end position="360"/>
    </location>
</feature>
<feature type="binding site" description="axial binding residue" evidence="1 4 10">
    <location>
        <position position="118"/>
    </location>
    <ligand>
        <name>chlorophyll a</name>
        <dbReference type="ChEBI" id="CHEBI:58416"/>
        <label>ChlzD1</label>
    </ligand>
    <ligandPart>
        <name>Mg</name>
        <dbReference type="ChEBI" id="CHEBI:25107"/>
    </ligandPart>
</feature>
<feature type="binding site" evidence="1 4 10">
    <location>
        <position position="126"/>
    </location>
    <ligand>
        <name>pheophytin a</name>
        <dbReference type="ChEBI" id="CHEBI:136840"/>
        <label>D1</label>
    </ligand>
</feature>
<feature type="binding site" evidence="4 10">
    <location>
        <position position="147"/>
    </location>
    <ligand>
        <name>pheophytin a</name>
        <dbReference type="ChEBI" id="CHEBI:136840"/>
        <label>D1</label>
    </ligand>
</feature>
<feature type="binding site" evidence="1 4 10">
    <location>
        <position position="170"/>
    </location>
    <ligand>
        <name>[CaMn4O5] cluster</name>
        <dbReference type="ChEBI" id="CHEBI:189552"/>
    </ligand>
</feature>
<feature type="binding site" evidence="1 4 10">
    <location>
        <position position="189"/>
    </location>
    <ligand>
        <name>[CaMn4O5] cluster</name>
        <dbReference type="ChEBI" id="CHEBI:189552"/>
    </ligand>
</feature>
<feature type="binding site" description="axial binding residue" evidence="1 4 10">
    <location>
        <position position="198"/>
    </location>
    <ligand>
        <name>chlorophyll a</name>
        <dbReference type="ChEBI" id="CHEBI:58416"/>
        <label>PD1</label>
    </ligand>
    <ligandPart>
        <name>Mg</name>
        <dbReference type="ChEBI" id="CHEBI:25107"/>
    </ligandPart>
</feature>
<feature type="binding site" evidence="1 4 10">
    <location>
        <position position="215"/>
    </location>
    <ligand>
        <name>a quinone</name>
        <dbReference type="ChEBI" id="CHEBI:132124"/>
        <label>B</label>
    </ligand>
</feature>
<feature type="binding site" evidence="1 4 10">
    <location>
        <position position="215"/>
    </location>
    <ligand>
        <name>Fe cation</name>
        <dbReference type="ChEBI" id="CHEBI:24875"/>
        <note>ligand shared with heterodimeric partner</note>
    </ligand>
</feature>
<feature type="binding site" evidence="1 4 10">
    <location>
        <position position="264"/>
    </location>
    <ligand>
        <name>a quinone</name>
        <dbReference type="ChEBI" id="CHEBI:132124"/>
        <label>B</label>
    </ligand>
</feature>
<feature type="binding site" evidence="4 10">
    <location>
        <position position="265"/>
    </location>
    <ligand>
        <name>a quinone</name>
        <dbReference type="ChEBI" id="CHEBI:132124"/>
        <label>B</label>
    </ligand>
</feature>
<feature type="binding site" evidence="1 4 10">
    <location>
        <position position="272"/>
    </location>
    <ligand>
        <name>Fe cation</name>
        <dbReference type="ChEBI" id="CHEBI:24875"/>
        <note>ligand shared with heterodimeric partner</note>
    </ligand>
</feature>
<feature type="binding site" evidence="1 4 10">
    <location>
        <position position="332"/>
    </location>
    <ligand>
        <name>[CaMn4O5] cluster</name>
        <dbReference type="ChEBI" id="CHEBI:189552"/>
    </ligand>
</feature>
<feature type="binding site" evidence="1">
    <location>
        <position position="333"/>
    </location>
    <ligand>
        <name>[CaMn4O5] cluster</name>
        <dbReference type="ChEBI" id="CHEBI:189552"/>
    </ligand>
</feature>
<feature type="binding site" evidence="1 4 10">
    <location>
        <position position="337"/>
    </location>
    <ligand>
        <name>[CaMn4O5] cluster</name>
        <dbReference type="ChEBI" id="CHEBI:189552"/>
    </ligand>
</feature>
<feature type="binding site" evidence="1 4 10">
    <location>
        <position position="342"/>
    </location>
    <ligand>
        <name>[CaMn4O5] cluster</name>
        <dbReference type="ChEBI" id="CHEBI:189552"/>
    </ligand>
</feature>
<feature type="binding site" evidence="1 7 10">
    <location>
        <position position="344"/>
    </location>
    <ligand>
        <name>[CaMn4O5] cluster</name>
        <dbReference type="ChEBI" id="CHEBI:189552"/>
    </ligand>
</feature>
<feature type="site" description="Tyrosine radical intermediate" evidence="1">
    <location>
        <position position="161"/>
    </location>
</feature>
<feature type="site" description="Stabilizes free radical intermediate" evidence="1">
    <location>
        <position position="190"/>
    </location>
</feature>
<feature type="site" description="Cleavage; by CtpA" evidence="1 4 8 10">
    <location>
        <begin position="344"/>
        <end position="345"/>
    </location>
</feature>
<feature type="mutagenesis site" description="Strong herbicide resistance." evidence="5">
    <original>SS</original>
    <variation>LA</variation>
    <location>
        <begin position="221"/>
        <end position="222"/>
    </location>
</feature>
<feature type="mutagenesis site" description="Herbicide resistance." evidence="5">
    <original>TT</original>
    <variation>AA</variation>
    <location>
        <begin position="227"/>
        <end position="228"/>
    </location>
</feature>
<feature type="mutagenesis site" description="Weak herbicide resistance." evidence="5">
    <original>Y</original>
    <variation>F</variation>
    <location>
        <position position="237"/>
    </location>
</feature>
<feature type="mutagenesis site" description="Weak herbicide resistance." evidence="5">
    <original>K</original>
    <variation>V</variation>
    <location>
        <position position="238"/>
    </location>
</feature>
<feature type="mutagenesis site" description="Herbicide resistance." evidence="3">
    <original>F</original>
    <variation>W</variation>
    <location>
        <position position="255"/>
    </location>
</feature>
<feature type="mutagenesis site" description="Herbicide resistance." evidence="5">
    <original>R</original>
    <variation>V</variation>
    <location>
        <position position="257"/>
    </location>
</feature>
<feature type="mutagenesis site" description="Strong herbicide resistance." evidence="3">
    <original>S</original>
    <variation>A</variation>
    <location>
        <position position="264"/>
    </location>
</feature>
<feature type="mutagenesis site" description="Herbicide resistance." evidence="3">
    <original>L</original>
    <variation>V</variation>
    <variation>M</variation>
    <variation>A</variation>
    <variation>S</variation>
    <location>
        <position position="271"/>
    </location>
</feature>
<feature type="helix" evidence="13">
    <location>
        <begin position="13"/>
        <end position="21"/>
    </location>
</feature>
<feature type="strand" evidence="13">
    <location>
        <begin position="26"/>
        <end position="28"/>
    </location>
</feature>
<feature type="helix" evidence="13">
    <location>
        <begin position="31"/>
        <end position="54"/>
    </location>
</feature>
<feature type="strand" evidence="13">
    <location>
        <begin position="62"/>
        <end position="64"/>
    </location>
</feature>
<feature type="helix" evidence="13">
    <location>
        <begin position="71"/>
        <end position="73"/>
    </location>
</feature>
<feature type="turn" evidence="13">
    <location>
        <begin position="77"/>
        <end position="79"/>
    </location>
</feature>
<feature type="turn" evidence="13">
    <location>
        <begin position="87"/>
        <end position="91"/>
    </location>
</feature>
<feature type="helix" evidence="13">
    <location>
        <begin position="96"/>
        <end position="98"/>
    </location>
</feature>
<feature type="strand" evidence="13">
    <location>
        <begin position="99"/>
        <end position="101"/>
    </location>
</feature>
<feature type="helix" evidence="13">
    <location>
        <begin position="102"/>
        <end position="107"/>
    </location>
</feature>
<feature type="helix" evidence="13">
    <location>
        <begin position="110"/>
        <end position="136"/>
    </location>
</feature>
<feature type="helix" evidence="13">
    <location>
        <begin position="143"/>
        <end position="158"/>
    </location>
</feature>
<feature type="helix" evidence="13">
    <location>
        <begin position="160"/>
        <end position="165"/>
    </location>
</feature>
<feature type="helix" evidence="13">
    <location>
        <begin position="168"/>
        <end position="170"/>
    </location>
</feature>
<feature type="helix" evidence="13">
    <location>
        <begin position="176"/>
        <end position="190"/>
    </location>
</feature>
<feature type="helix" evidence="13">
    <location>
        <begin position="192"/>
        <end position="194"/>
    </location>
</feature>
<feature type="helix" evidence="13">
    <location>
        <begin position="196"/>
        <end position="221"/>
    </location>
</feature>
<feature type="strand" evidence="13">
    <location>
        <begin position="229"/>
        <end position="231"/>
    </location>
</feature>
<feature type="helix" evidence="13">
    <location>
        <begin position="233"/>
        <end position="236"/>
    </location>
</feature>
<feature type="helix" evidence="13">
    <location>
        <begin position="248"/>
        <end position="258"/>
    </location>
</feature>
<feature type="helix" evidence="13">
    <location>
        <begin position="261"/>
        <end position="263"/>
    </location>
</feature>
<feature type="helix" evidence="13">
    <location>
        <begin position="268"/>
        <end position="293"/>
    </location>
</feature>
<feature type="turn" evidence="13">
    <location>
        <begin position="294"/>
        <end position="296"/>
    </location>
</feature>
<feature type="strand" evidence="13">
    <location>
        <begin position="297"/>
        <end position="299"/>
    </location>
</feature>
<feature type="strand" evidence="13">
    <location>
        <begin position="309"/>
        <end position="311"/>
    </location>
</feature>
<feature type="helix" evidence="13">
    <location>
        <begin position="317"/>
        <end position="331"/>
    </location>
</feature>
<feature type="turn" evidence="13">
    <location>
        <begin position="332"/>
        <end position="336"/>
    </location>
</feature>
<feature type="strand" evidence="13">
    <location>
        <begin position="339"/>
        <end position="341"/>
    </location>
</feature>
<evidence type="ECO:0000255" key="1">
    <source>
        <dbReference type="HAMAP-Rule" id="MF_01379"/>
    </source>
</evidence>
<evidence type="ECO:0000269" key="2">
    <source>
    </source>
</evidence>
<evidence type="ECO:0000269" key="3">
    <source>
    </source>
</evidence>
<evidence type="ECO:0000269" key="4">
    <source>
    </source>
</evidence>
<evidence type="ECO:0000269" key="5">
    <source>
    </source>
</evidence>
<evidence type="ECO:0000305" key="6"/>
<evidence type="ECO:0000305" key="7">
    <source>
    </source>
</evidence>
<evidence type="ECO:0000305" key="8">
    <source>
    </source>
</evidence>
<evidence type="ECO:0000305" key="9">
    <source>
    </source>
</evidence>
<evidence type="ECO:0000312" key="10">
    <source>
        <dbReference type="PDB" id="7N8O"/>
    </source>
</evidence>
<evidence type="ECO:0007744" key="11">
    <source>
        <dbReference type="PDB" id="7N8O"/>
    </source>
</evidence>
<evidence type="ECO:0007744" key="12">
    <source>
        <dbReference type="PDB" id="7RCV"/>
    </source>
</evidence>
<evidence type="ECO:0007829" key="13">
    <source>
        <dbReference type="PDB" id="7N8O"/>
    </source>
</evidence>
<comment type="function">
    <text evidence="1 4">Photosystem II (PSII) is a light-driven water:plastoquinone oxidoreductase that uses light energy to abstract electrons from H(2)O, generating O(2) and a proton gradient subsequently used for ATP formation. It consists of a core antenna complex that captures photons, and an electron transfer chain that converts photonic excitation into a charge separation. The D1/D2 (PsbA/PsbD) reaction center heterodimer binds P680, the primary electron donor of PSII as well as several subsequent electron acceptors.</text>
</comment>
<comment type="catalytic activity">
    <reaction evidence="1">
        <text>2 a plastoquinone + 4 hnu + 2 H2O = 2 a plastoquinol + O2</text>
        <dbReference type="Rhea" id="RHEA:36359"/>
        <dbReference type="Rhea" id="RHEA-COMP:9561"/>
        <dbReference type="Rhea" id="RHEA-COMP:9562"/>
        <dbReference type="ChEBI" id="CHEBI:15377"/>
        <dbReference type="ChEBI" id="CHEBI:15379"/>
        <dbReference type="ChEBI" id="CHEBI:17757"/>
        <dbReference type="ChEBI" id="CHEBI:30212"/>
        <dbReference type="ChEBI" id="CHEBI:62192"/>
        <dbReference type="EC" id="1.10.3.9"/>
    </reaction>
</comment>
<comment type="cofactor">
    <text evidence="1 4 10">The D1/D2 heterodimer binds P680, chlorophylls that are the primary electron donor of PSII, and subsequent electron acceptors. It shares a non-heme iron and each subunit binds pheophytin, quinone, additional chlorophylls, carotenoids and lipids. D1 provides most of the ligands for the Mn4-Ca-O5 cluster of the oxygen-evolving complex (OEC). There is also a Cl(-1) ion associated with D1 and D2, which is required for oxygen evolution. The PSII complex binds additional chlorophylls, carotenoids and specific lipids.</text>
</comment>
<comment type="subunit">
    <text evidence="1 2 4">PSII is composed of 1 copy each of membrane proteins PsbA, PsbB, PsbC, PsbD, PsbE, PsbF, PsbH, PsbI, PsbJ, PsbK, PsbL, PsbM, PsbT, PsbX, PsbY, PsbZ, Psb30/Ycf12, peripheral proteins PsbO, CyanoQ (PsbQ), PsbU, PsbV and a large number of cofactors. It forms dimeric complexes.</text>
</comment>
<comment type="subcellular location">
    <subcellularLocation>
        <location evidence="1 2 4 9">Cellular thylakoid membrane</location>
        <topology evidence="1 4 9">Multi-pass membrane protein</topology>
    </subcellularLocation>
</comment>
<comment type="PTM">
    <text evidence="1 4 8">C-terminally processed by CtpA; processing is essential to allow assembly of the oxygen-evolving complex and photosynthetic growth.</text>
</comment>
<comment type="PTM">
    <text evidence="1">Tyr-161 forms a radical intermediate that is referred to as redox-active TyrZ, YZ or Y-Z.</text>
</comment>
<comment type="miscellaneous">
    <text evidence="1">Cyanobacteria usually contain more than 2 copies of the psbA gene.</text>
</comment>
<comment type="miscellaneous">
    <text evidence="1">2 of the reaction center chlorophylls (ChlD1 and ChlD2) are entirely coordinated by water.</text>
</comment>
<comment type="miscellaneous">
    <text evidence="1">Herbicides such as atrazine, BNT, diuron or ioxynil bind in the Q(B) binding site and block subsequent electron transfer.</text>
</comment>
<comment type="similarity">
    <text evidence="1">Belongs to the reaction center PufL/M/PsbA/D family.</text>
</comment>
<protein>
    <recommendedName>
        <fullName evidence="1">Photosystem II protein D1 2</fullName>
        <shortName evidence="1">PSII D1 protein 2</shortName>
        <ecNumber evidence="1">1.10.3.9</ecNumber>
    </recommendedName>
    <alternativeName>
        <fullName evidence="1">Photosystem II Q(B) protein 2</fullName>
    </alternativeName>
</protein>
<proteinExistence type="evidence at protein level"/>
<dbReference type="EC" id="1.10.3.9" evidence="1"/>
<dbReference type="EMBL" id="X56000">
    <property type="protein sequence ID" value="CAA39472.1"/>
    <property type="molecule type" value="Genomic_DNA"/>
</dbReference>
<dbReference type="EMBL" id="X13547">
    <property type="protein sequence ID" value="CAA31899.1"/>
    <property type="molecule type" value="Genomic_DNA"/>
</dbReference>
<dbReference type="EMBL" id="BA000022">
    <property type="protein sequence ID" value="BAA18230.1"/>
    <property type="molecule type" value="Genomic_DNA"/>
</dbReference>
<dbReference type="EMBL" id="BA000022">
    <property type="protein sequence ID" value="BAA16586.1"/>
    <property type="molecule type" value="Genomic_DNA"/>
</dbReference>
<dbReference type="PIR" id="S13112">
    <property type="entry name" value="F2YB16"/>
</dbReference>
<dbReference type="PDB" id="6WJ6">
    <property type="method" value="EM"/>
    <property type="resolution" value="2.58 A"/>
    <property type="chains" value="A=1-360"/>
</dbReference>
<dbReference type="PDB" id="7N8O">
    <property type="method" value="EM"/>
    <property type="resolution" value="1.93 A"/>
    <property type="chains" value="A/a=11-344"/>
</dbReference>
<dbReference type="PDB" id="7RCV">
    <property type="method" value="EM"/>
    <property type="resolution" value="2.01 A"/>
    <property type="chains" value="A/a=11-344"/>
</dbReference>
<dbReference type="PDB" id="8AM5">
    <property type="method" value="EM"/>
    <property type="resolution" value="3.10 A"/>
    <property type="chains" value="A=1-344"/>
</dbReference>
<dbReference type="PDB" id="8ASL">
    <property type="method" value="EM"/>
    <property type="resolution" value="3.15 A"/>
    <property type="chains" value="A=1-344"/>
</dbReference>
<dbReference type="PDB" id="8TOW">
    <property type="method" value="EM"/>
    <property type="resolution" value="2.14 A"/>
    <property type="chains" value="A/a=1-360"/>
</dbReference>
<dbReference type="PDB" id="9EH5">
    <property type="method" value="EM"/>
    <property type="resolution" value="1.97 A"/>
    <property type="chains" value="A/a=1-344"/>
</dbReference>
<dbReference type="PDBsum" id="6WJ6"/>
<dbReference type="PDBsum" id="7N8O"/>
<dbReference type="PDBsum" id="7RCV"/>
<dbReference type="PDBsum" id="8AM5"/>
<dbReference type="PDBsum" id="8ASL"/>
<dbReference type="PDBsum" id="8TOW"/>
<dbReference type="PDBsum" id="9EH5"/>
<dbReference type="EMDB" id="EMD-15522"/>
<dbReference type="EMDB" id="EMD-15618"/>
<dbReference type="EMDB" id="EMD-21690"/>
<dbReference type="EMDB" id="EMD-24239"/>
<dbReference type="EMDB" id="EMD-24407"/>
<dbReference type="EMDB" id="EMD-41460"/>
<dbReference type="EMDB" id="EMD-48046"/>
<dbReference type="SMR" id="P16033"/>
<dbReference type="IntAct" id="P16033">
    <property type="interactions" value="5"/>
</dbReference>
<dbReference type="STRING" id="1148.gene:10497441"/>
<dbReference type="TCDB" id="3.E.2.2.2">
    <property type="family name" value="the photosynthetic reaction center (prc) family"/>
</dbReference>
<dbReference type="PaxDb" id="1148-1651658"/>
<dbReference type="EnsemblBacteria" id="BAA16586">
    <property type="protein sequence ID" value="BAA16586"/>
    <property type="gene ID" value="BAA16586"/>
</dbReference>
<dbReference type="EnsemblBacteria" id="BAA18230">
    <property type="protein sequence ID" value="BAA18230"/>
    <property type="gene ID" value="BAA18230"/>
</dbReference>
<dbReference type="KEGG" id="syn:sll1867"/>
<dbReference type="KEGG" id="syn:slr1311"/>
<dbReference type="eggNOG" id="ENOG502Z87P">
    <property type="taxonomic scope" value="Bacteria"/>
</dbReference>
<dbReference type="InParanoid" id="P16033"/>
<dbReference type="PhylomeDB" id="P16033"/>
<dbReference type="BRENDA" id="1.10.3.9">
    <property type="organism ID" value="6192"/>
</dbReference>
<dbReference type="Proteomes" id="UP000001425">
    <property type="component" value="Chromosome"/>
</dbReference>
<dbReference type="GO" id="GO:0031676">
    <property type="term" value="C:plasma membrane-derived thylakoid membrane"/>
    <property type="evidence" value="ECO:0007669"/>
    <property type="project" value="UniProtKB-SubCell"/>
</dbReference>
<dbReference type="GO" id="GO:0030096">
    <property type="term" value="C:plasma membrane-derived thylakoid photosystem II"/>
    <property type="evidence" value="ECO:0000314"/>
    <property type="project" value="UniProtKB"/>
</dbReference>
<dbReference type="GO" id="GO:0016168">
    <property type="term" value="F:chlorophyll binding"/>
    <property type="evidence" value="ECO:0007669"/>
    <property type="project" value="UniProtKB-UniRule"/>
</dbReference>
<dbReference type="GO" id="GO:0045156">
    <property type="term" value="F:electron transporter, transferring electrons within the cyclic electron transport pathway of photosynthesis activity"/>
    <property type="evidence" value="ECO:0007669"/>
    <property type="project" value="InterPro"/>
</dbReference>
<dbReference type="GO" id="GO:0005506">
    <property type="term" value="F:iron ion binding"/>
    <property type="evidence" value="ECO:0007669"/>
    <property type="project" value="UniProtKB-UniRule"/>
</dbReference>
<dbReference type="GO" id="GO:0016682">
    <property type="term" value="F:oxidoreductase activity, acting on diphenols and related substances as donors, oxygen as acceptor"/>
    <property type="evidence" value="ECO:0007669"/>
    <property type="project" value="UniProtKB-UniRule"/>
</dbReference>
<dbReference type="GO" id="GO:0010242">
    <property type="term" value="F:oxygen evolving activity"/>
    <property type="evidence" value="ECO:0007669"/>
    <property type="project" value="UniProtKB-EC"/>
</dbReference>
<dbReference type="GO" id="GO:0009772">
    <property type="term" value="P:photosynthetic electron transport in photosystem II"/>
    <property type="evidence" value="ECO:0007669"/>
    <property type="project" value="InterPro"/>
</dbReference>
<dbReference type="GO" id="GO:0009635">
    <property type="term" value="P:response to herbicide"/>
    <property type="evidence" value="ECO:0007669"/>
    <property type="project" value="UniProtKB-KW"/>
</dbReference>
<dbReference type="CDD" id="cd09289">
    <property type="entry name" value="Photosystem-II_D1"/>
    <property type="match status" value="1"/>
</dbReference>
<dbReference type="FunFam" id="1.20.85.10:FF:000002">
    <property type="entry name" value="Photosystem II protein D1"/>
    <property type="match status" value="1"/>
</dbReference>
<dbReference type="Gene3D" id="1.20.85.10">
    <property type="entry name" value="Photosystem II protein D1-like"/>
    <property type="match status" value="2"/>
</dbReference>
<dbReference type="HAMAP" id="MF_01379">
    <property type="entry name" value="PSII_PsbA_D1"/>
    <property type="match status" value="1"/>
</dbReference>
<dbReference type="InterPro" id="IPR055266">
    <property type="entry name" value="D1/D2"/>
</dbReference>
<dbReference type="InterPro" id="IPR036854">
    <property type="entry name" value="Photo_II_D1/D2_sf"/>
</dbReference>
<dbReference type="InterPro" id="IPR000484">
    <property type="entry name" value="Photo_RC_L/M"/>
</dbReference>
<dbReference type="InterPro" id="IPR055265">
    <property type="entry name" value="Photo_RC_L/M_CS"/>
</dbReference>
<dbReference type="InterPro" id="IPR005867">
    <property type="entry name" value="PSII_D1"/>
</dbReference>
<dbReference type="NCBIfam" id="TIGR01151">
    <property type="entry name" value="psbA"/>
    <property type="match status" value="1"/>
</dbReference>
<dbReference type="PANTHER" id="PTHR33149:SF12">
    <property type="entry name" value="PHOTOSYSTEM II D2 PROTEIN"/>
    <property type="match status" value="1"/>
</dbReference>
<dbReference type="PANTHER" id="PTHR33149">
    <property type="entry name" value="PHOTOSYSTEM II PROTEIN D1"/>
    <property type="match status" value="1"/>
</dbReference>
<dbReference type="Pfam" id="PF00124">
    <property type="entry name" value="Photo_RC"/>
    <property type="match status" value="1"/>
</dbReference>
<dbReference type="PRINTS" id="PR00256">
    <property type="entry name" value="REACTNCENTRE"/>
</dbReference>
<dbReference type="SUPFAM" id="SSF81483">
    <property type="entry name" value="Bacterial photosystem II reaction centre, L and M subunits"/>
    <property type="match status" value="1"/>
</dbReference>
<dbReference type="PROSITE" id="PS00244">
    <property type="entry name" value="REACTION_CENTER"/>
    <property type="match status" value="1"/>
</dbReference>